<name>TET5D_HUMAN</name>
<gene>
    <name evidence="9" type="primary">TENT5D</name>
    <name evidence="9" type="synonym">FAM46D</name>
</gene>
<sequence length="389" mass="44500">MSEIRFTNLTWDQVITLDQVLDEVIPIHGKGNFPTMEVKPKDIIHVVKDQLIGQGIIVKDARLNGSVASYILASHNGISYKDLDVIFGVELPGNEEFQVVKDAVLDCLLDFLPKDVKKEKLSPDIMKDAYVQKLVKVCNGHDCWSLISLSNNTGKNLELKFVSSLRRQFEFSVDSFQIVLDPMLDFYSDKNAKLTKESYPVVVAESMYGDFQEAMTHLQHKLICTRKPEEIRGGGLLKYCSLLVHGFKPACMSEIKNLERYMCSRFFIDFPHIEEQQKKIESYLHNHFIGEGMTKYDYLMTLHGVVNESTVCLMSYERRQILHLITMMALKVLGELNILPNTQKVTCFYQPAPYFAAEARYPIYVIPEPPPVSFQPYHPLHFRGSNGMS</sequence>
<organism>
    <name type="scientific">Homo sapiens</name>
    <name type="common">Human</name>
    <dbReference type="NCBI Taxonomy" id="9606"/>
    <lineage>
        <taxon>Eukaryota</taxon>
        <taxon>Metazoa</taxon>
        <taxon>Chordata</taxon>
        <taxon>Craniata</taxon>
        <taxon>Vertebrata</taxon>
        <taxon>Euteleostomi</taxon>
        <taxon>Mammalia</taxon>
        <taxon>Eutheria</taxon>
        <taxon>Euarchontoglires</taxon>
        <taxon>Primates</taxon>
        <taxon>Haplorrhini</taxon>
        <taxon>Catarrhini</taxon>
        <taxon>Hominidae</taxon>
        <taxon>Homo</taxon>
    </lineage>
</organism>
<evidence type="ECO:0000269" key="1">
    <source>
    </source>
</evidence>
<evidence type="ECO:0000269" key="2">
    <source>
    </source>
</evidence>
<evidence type="ECO:0000269" key="3">
    <source>
    </source>
</evidence>
<evidence type="ECO:0000269" key="4">
    <source>
    </source>
</evidence>
<evidence type="ECO:0000269" key="5">
    <source>
    </source>
</evidence>
<evidence type="ECO:0000303" key="6">
    <source>
    </source>
</evidence>
<evidence type="ECO:0000305" key="7"/>
<evidence type="ECO:0000305" key="8">
    <source>
    </source>
</evidence>
<evidence type="ECO:0000312" key="9">
    <source>
        <dbReference type="HGNC" id="HGNC:28399"/>
    </source>
</evidence>
<comment type="function">
    <text evidence="4 5">Catalyzes the transfer of one adenosine molecule from an ATP to an mRNA poly(A) tail bearing a 3'-OH terminal group.</text>
</comment>
<comment type="catalytic activity">
    <reaction evidence="4 5">
        <text>RNA(n) + ATP = RNA(n)-3'-adenine ribonucleotide + diphosphate</text>
        <dbReference type="Rhea" id="RHEA:11332"/>
        <dbReference type="Rhea" id="RHEA-COMP:14527"/>
        <dbReference type="Rhea" id="RHEA-COMP:17347"/>
        <dbReference type="ChEBI" id="CHEBI:30616"/>
        <dbReference type="ChEBI" id="CHEBI:33019"/>
        <dbReference type="ChEBI" id="CHEBI:140395"/>
        <dbReference type="ChEBI" id="CHEBI:173115"/>
        <dbReference type="EC" id="2.7.7.19"/>
    </reaction>
    <physiologicalReaction direction="left-to-right" evidence="8">
        <dbReference type="Rhea" id="RHEA:11333"/>
    </physiologicalReaction>
</comment>
<comment type="interaction">
    <interactant intactId="EBI-744726">
        <id>Q8NEK8</id>
    </interactant>
    <interactant intactId="EBI-948603">
        <id>Q03989</id>
        <label>ARID5A</label>
    </interactant>
    <organismsDiffer>false</organismsDiffer>
    <experiments>3</experiments>
</comment>
<comment type="interaction">
    <interactant intactId="EBI-744726">
        <id>Q8NEK8</id>
    </interactant>
    <interactant intactId="EBI-12809220">
        <id>Q5SWW7</id>
        <label>C10orf55</label>
    </interactant>
    <organismsDiffer>false</organismsDiffer>
    <experiments>3</experiments>
</comment>
<comment type="interaction">
    <interactant intactId="EBI-744726">
        <id>Q8NEK8</id>
    </interactant>
    <interactant intactId="EBI-946029">
        <id>Q6P1W5</id>
        <label>C1orf94</label>
    </interactant>
    <organismsDiffer>false</organismsDiffer>
    <experiments>3</experiments>
</comment>
<comment type="interaction">
    <interactant intactId="EBI-744726">
        <id>Q8NEK8</id>
    </interactant>
    <interactant intactId="EBI-749277">
        <id>Q96IM9</id>
        <label>DYDC2</label>
    </interactant>
    <organismsDiffer>false</organismsDiffer>
    <experiments>3</experiments>
</comment>
<comment type="interaction">
    <interactant intactId="EBI-744726">
        <id>Q8NEK8</id>
    </interactant>
    <interactant intactId="EBI-7231130">
        <id>Q9Y5J3</id>
        <label>HEY1</label>
    </interactant>
    <organismsDiffer>false</organismsDiffer>
    <experiments>3</experiments>
</comment>
<comment type="interaction">
    <interactant intactId="EBI-744726">
        <id>Q8NEK8</id>
    </interactant>
    <interactant intactId="EBI-1052037">
        <id>Q8IUC1</id>
        <label>KRTAP11-1</label>
    </interactant>
    <organismsDiffer>false</organismsDiffer>
    <experiments>3</experiments>
</comment>
<comment type="interaction">
    <interactant intactId="EBI-744726">
        <id>Q8NEK8</id>
    </interactant>
    <interactant intactId="EBI-12196745">
        <id>Q3LHN2</id>
        <label>KRTAP19-2</label>
    </interactant>
    <organismsDiffer>false</organismsDiffer>
    <experiments>3</experiments>
</comment>
<comment type="interaction">
    <interactant intactId="EBI-744726">
        <id>Q8NEK8</id>
    </interactant>
    <interactant intactId="EBI-11962084">
        <id>Q3LI66</id>
        <label>KRTAP6-2</label>
    </interactant>
    <organismsDiffer>false</organismsDiffer>
    <experiments>5</experiments>
</comment>
<comment type="interaction">
    <interactant intactId="EBI-744726">
        <id>Q8NEK8</id>
    </interactant>
    <interactant intactId="EBI-6447480">
        <id>P35548</id>
        <label>MSX2</label>
    </interactant>
    <organismsDiffer>false</organismsDiffer>
    <experiments>3</experiments>
</comment>
<comment type="interaction">
    <interactant intactId="EBI-744726">
        <id>Q8NEK8</id>
    </interactant>
    <interactant intactId="EBI-1055272">
        <id>Q9H361</id>
        <label>PABPC3</label>
    </interactant>
    <organismsDiffer>false</organismsDiffer>
    <experiments>3</experiments>
</comment>
<comment type="interaction">
    <interactant intactId="EBI-744726">
        <id>Q8NEK8</id>
    </interactant>
    <interactant intactId="EBI-949255">
        <id>Q58EX7</id>
        <label>PLEKHG4</label>
    </interactant>
    <organismsDiffer>false</organismsDiffer>
    <experiments>3</experiments>
</comment>
<comment type="interaction">
    <interactant intactId="EBI-744726">
        <id>Q8NEK8</id>
    </interactant>
    <interactant intactId="EBI-1047946">
        <id>P26045</id>
        <label>PTPN3</label>
    </interactant>
    <organismsDiffer>false</organismsDiffer>
    <experiments>3</experiments>
</comment>
<comment type="interaction">
    <interactant intactId="EBI-744726">
        <id>Q8NEK8</id>
    </interactant>
    <interactant intactId="EBI-2845202">
        <id>Q86WH2</id>
        <label>RASSF3</label>
    </interactant>
    <organismsDiffer>false</organismsDiffer>
    <experiments>3</experiments>
</comment>
<comment type="tissue specificity">
    <text evidence="3">restricted to testis.</text>
</comment>
<comment type="similarity">
    <text evidence="7">Belongs to the TENT family.</text>
</comment>
<dbReference type="EC" id="2.7.7.19" evidence="4 5"/>
<dbReference type="EMBL" id="AK128147">
    <property type="protein sequence ID" value="BAG54638.1"/>
    <property type="molecule type" value="mRNA"/>
</dbReference>
<dbReference type="EMBL" id="AK313875">
    <property type="protein sequence ID" value="BAG36603.1"/>
    <property type="molecule type" value="mRNA"/>
</dbReference>
<dbReference type="EMBL" id="BX537938">
    <property type="protein sequence ID" value="CAD97909.1"/>
    <property type="molecule type" value="mRNA"/>
</dbReference>
<dbReference type="EMBL" id="AL591431">
    <property type="status" value="NOT_ANNOTATED_CDS"/>
    <property type="molecule type" value="Genomic_DNA"/>
</dbReference>
<dbReference type="EMBL" id="CH471104">
    <property type="protein sequence ID" value="EAW98586.1"/>
    <property type="molecule type" value="Genomic_DNA"/>
</dbReference>
<dbReference type="EMBL" id="BC028710">
    <property type="protein sequence ID" value="AAH28710.1"/>
    <property type="molecule type" value="mRNA"/>
</dbReference>
<dbReference type="EMBL" id="BC030784">
    <property type="protein sequence ID" value="AAH30784.1"/>
    <property type="molecule type" value="mRNA"/>
</dbReference>
<dbReference type="EMBL" id="BC034979">
    <property type="protein sequence ID" value="AAH34979.1"/>
    <property type="molecule type" value="mRNA"/>
</dbReference>
<dbReference type="CCDS" id="CCDS14446.1"/>
<dbReference type="RefSeq" id="NP_001164045.1">
    <property type="nucleotide sequence ID" value="NM_001170574.2"/>
</dbReference>
<dbReference type="RefSeq" id="NP_689843.1">
    <property type="nucleotide sequence ID" value="NM_152630.5"/>
</dbReference>
<dbReference type="SMR" id="Q8NEK8"/>
<dbReference type="BioGRID" id="127991">
    <property type="interactions" value="19"/>
</dbReference>
<dbReference type="FunCoup" id="Q8NEK8">
    <property type="interactions" value="35"/>
</dbReference>
<dbReference type="IntAct" id="Q8NEK8">
    <property type="interactions" value="18"/>
</dbReference>
<dbReference type="STRING" id="9606.ENSP00000443410"/>
<dbReference type="iPTMnet" id="Q8NEK8"/>
<dbReference type="PhosphoSitePlus" id="Q8NEK8"/>
<dbReference type="BioMuta" id="FAM46D"/>
<dbReference type="DMDM" id="74751253"/>
<dbReference type="MassIVE" id="Q8NEK8"/>
<dbReference type="PaxDb" id="9606-ENSP00000443410"/>
<dbReference type="PeptideAtlas" id="Q8NEK8"/>
<dbReference type="ProteomicsDB" id="73173"/>
<dbReference type="Antibodypedia" id="56143">
    <property type="antibodies" value="68 antibodies from 16 providers"/>
</dbReference>
<dbReference type="DNASU" id="169966"/>
<dbReference type="Ensembl" id="ENST00000308293.6">
    <property type="protein sequence ID" value="ENSP00000308575.5"/>
    <property type="gene ID" value="ENSG00000174016.11"/>
</dbReference>
<dbReference type="Ensembl" id="ENST00000538312.5">
    <property type="protein sequence ID" value="ENSP00000443410.1"/>
    <property type="gene ID" value="ENSG00000174016.11"/>
</dbReference>
<dbReference type="GeneID" id="169966"/>
<dbReference type="KEGG" id="hsa:169966"/>
<dbReference type="MANE-Select" id="ENST00000308293.6">
    <property type="protein sequence ID" value="ENSP00000308575.5"/>
    <property type="RefSeq nucleotide sequence ID" value="NM_152630.5"/>
    <property type="RefSeq protein sequence ID" value="NP_689843.1"/>
</dbReference>
<dbReference type="UCSC" id="uc004edl.1">
    <property type="organism name" value="human"/>
</dbReference>
<dbReference type="AGR" id="HGNC:28399"/>
<dbReference type="CTD" id="169966"/>
<dbReference type="DisGeNET" id="169966"/>
<dbReference type="GeneCards" id="TENT5D"/>
<dbReference type="HGNC" id="HGNC:28399">
    <property type="gene designation" value="TENT5D"/>
</dbReference>
<dbReference type="HPA" id="ENSG00000174016">
    <property type="expression patterns" value="Tissue enriched (testis)"/>
</dbReference>
<dbReference type="MIM" id="300976">
    <property type="type" value="gene"/>
</dbReference>
<dbReference type="neXtProt" id="NX_Q8NEK8"/>
<dbReference type="OpenTargets" id="ENSG00000174016"/>
<dbReference type="PharmGKB" id="PA134947605"/>
<dbReference type="VEuPathDB" id="HostDB:ENSG00000174016"/>
<dbReference type="eggNOG" id="KOG3852">
    <property type="taxonomic scope" value="Eukaryota"/>
</dbReference>
<dbReference type="GeneTree" id="ENSGT00940000162488"/>
<dbReference type="HOGENOM" id="CLU_008115_2_0_1"/>
<dbReference type="InParanoid" id="Q8NEK8"/>
<dbReference type="OMA" id="AMTHLQY"/>
<dbReference type="OrthoDB" id="10065073at2759"/>
<dbReference type="PAN-GO" id="Q8NEK8">
    <property type="GO annotations" value="2 GO annotations based on evolutionary models"/>
</dbReference>
<dbReference type="PhylomeDB" id="Q8NEK8"/>
<dbReference type="TreeFam" id="TF315239"/>
<dbReference type="BRENDA" id="2.7.7.19">
    <property type="organism ID" value="2681"/>
</dbReference>
<dbReference type="PathwayCommons" id="Q8NEK8"/>
<dbReference type="SignaLink" id="Q8NEK8"/>
<dbReference type="BioGRID-ORCS" id="169966">
    <property type="hits" value="20 hits in 762 CRISPR screens"/>
</dbReference>
<dbReference type="GenomeRNAi" id="169966"/>
<dbReference type="Pharos" id="Q8NEK8">
    <property type="development level" value="Tbio"/>
</dbReference>
<dbReference type="PRO" id="PR:Q8NEK8"/>
<dbReference type="Proteomes" id="UP000005640">
    <property type="component" value="Chromosome X"/>
</dbReference>
<dbReference type="RNAct" id="Q8NEK8">
    <property type="molecule type" value="protein"/>
</dbReference>
<dbReference type="Bgee" id="ENSG00000174016">
    <property type="expression patterns" value="Expressed in sperm and 8 other cell types or tissues"/>
</dbReference>
<dbReference type="GO" id="GO:1990817">
    <property type="term" value="F:poly(A) RNA polymerase activity"/>
    <property type="evidence" value="ECO:0000314"/>
    <property type="project" value="UniProtKB"/>
</dbReference>
<dbReference type="GO" id="GO:0048255">
    <property type="term" value="P:mRNA stabilization"/>
    <property type="evidence" value="ECO:0000318"/>
    <property type="project" value="GO_Central"/>
</dbReference>
<dbReference type="InterPro" id="IPR012937">
    <property type="entry name" value="TET5"/>
</dbReference>
<dbReference type="PANTHER" id="PTHR12974">
    <property type="entry name" value="PRION-LIKE- Q/N-RICH -DOMAIN-BEARING PROTEIN PROTEIN 44"/>
    <property type="match status" value="1"/>
</dbReference>
<dbReference type="PANTHER" id="PTHR12974:SF30">
    <property type="entry name" value="TERMINAL NUCLEOTIDYLTRANSFERASE 5D"/>
    <property type="match status" value="1"/>
</dbReference>
<dbReference type="Pfam" id="PF07984">
    <property type="entry name" value="NTP_transf_7"/>
    <property type="match status" value="1"/>
</dbReference>
<dbReference type="SMART" id="SM01153">
    <property type="entry name" value="DUF1693"/>
    <property type="match status" value="1"/>
</dbReference>
<accession>Q8NEK8</accession>
<accession>B2R9Q6</accession>
<accession>Q7Z3F6</accession>
<accession>Q8NHU1</accession>
<protein>
    <recommendedName>
        <fullName evidence="7">Terminal nucleotidyltransferase 5D</fullName>
        <ecNumber evidence="4 5">2.7.7.19</ecNumber>
    </recommendedName>
    <alternativeName>
        <fullName evidence="6">Non-canonical poly(A) polymerase FAM46D</fullName>
    </alternativeName>
</protein>
<reference key="1">
    <citation type="journal article" date="2004" name="Nat. Genet.">
        <title>Complete sequencing and characterization of 21,243 full-length human cDNAs.</title>
        <authorList>
            <person name="Ota T."/>
            <person name="Suzuki Y."/>
            <person name="Nishikawa T."/>
            <person name="Otsuki T."/>
            <person name="Sugiyama T."/>
            <person name="Irie R."/>
            <person name="Wakamatsu A."/>
            <person name="Hayashi K."/>
            <person name="Sato H."/>
            <person name="Nagai K."/>
            <person name="Kimura K."/>
            <person name="Makita H."/>
            <person name="Sekine M."/>
            <person name="Obayashi M."/>
            <person name="Nishi T."/>
            <person name="Shibahara T."/>
            <person name="Tanaka T."/>
            <person name="Ishii S."/>
            <person name="Yamamoto J."/>
            <person name="Saito K."/>
            <person name="Kawai Y."/>
            <person name="Isono Y."/>
            <person name="Nakamura Y."/>
            <person name="Nagahari K."/>
            <person name="Murakami K."/>
            <person name="Yasuda T."/>
            <person name="Iwayanagi T."/>
            <person name="Wagatsuma M."/>
            <person name="Shiratori A."/>
            <person name="Sudo H."/>
            <person name="Hosoiri T."/>
            <person name="Kaku Y."/>
            <person name="Kodaira H."/>
            <person name="Kondo H."/>
            <person name="Sugawara M."/>
            <person name="Takahashi M."/>
            <person name="Kanda K."/>
            <person name="Yokoi T."/>
            <person name="Furuya T."/>
            <person name="Kikkawa E."/>
            <person name="Omura Y."/>
            <person name="Abe K."/>
            <person name="Kamihara K."/>
            <person name="Katsuta N."/>
            <person name="Sato K."/>
            <person name="Tanikawa M."/>
            <person name="Yamazaki M."/>
            <person name="Ninomiya K."/>
            <person name="Ishibashi T."/>
            <person name="Yamashita H."/>
            <person name="Murakawa K."/>
            <person name="Fujimori K."/>
            <person name="Tanai H."/>
            <person name="Kimata M."/>
            <person name="Watanabe M."/>
            <person name="Hiraoka S."/>
            <person name="Chiba Y."/>
            <person name="Ishida S."/>
            <person name="Ono Y."/>
            <person name="Takiguchi S."/>
            <person name="Watanabe S."/>
            <person name="Yosida M."/>
            <person name="Hotuta T."/>
            <person name="Kusano J."/>
            <person name="Kanehori K."/>
            <person name="Takahashi-Fujii A."/>
            <person name="Hara H."/>
            <person name="Tanase T.-O."/>
            <person name="Nomura Y."/>
            <person name="Togiya S."/>
            <person name="Komai F."/>
            <person name="Hara R."/>
            <person name="Takeuchi K."/>
            <person name="Arita M."/>
            <person name="Imose N."/>
            <person name="Musashino K."/>
            <person name="Yuuki H."/>
            <person name="Oshima A."/>
            <person name="Sasaki N."/>
            <person name="Aotsuka S."/>
            <person name="Yoshikawa Y."/>
            <person name="Matsunawa H."/>
            <person name="Ichihara T."/>
            <person name="Shiohata N."/>
            <person name="Sano S."/>
            <person name="Moriya S."/>
            <person name="Momiyama H."/>
            <person name="Satoh N."/>
            <person name="Takami S."/>
            <person name="Terashima Y."/>
            <person name="Suzuki O."/>
            <person name="Nakagawa S."/>
            <person name="Senoh A."/>
            <person name="Mizoguchi H."/>
            <person name="Goto Y."/>
            <person name="Shimizu F."/>
            <person name="Wakebe H."/>
            <person name="Hishigaki H."/>
            <person name="Watanabe T."/>
            <person name="Sugiyama A."/>
            <person name="Takemoto M."/>
            <person name="Kawakami B."/>
            <person name="Yamazaki M."/>
            <person name="Watanabe K."/>
            <person name="Kumagai A."/>
            <person name="Itakura S."/>
            <person name="Fukuzumi Y."/>
            <person name="Fujimori Y."/>
            <person name="Komiyama M."/>
            <person name="Tashiro H."/>
            <person name="Tanigami A."/>
            <person name="Fujiwara T."/>
            <person name="Ono T."/>
            <person name="Yamada K."/>
            <person name="Fujii Y."/>
            <person name="Ozaki K."/>
            <person name="Hirao M."/>
            <person name="Ohmori Y."/>
            <person name="Kawabata A."/>
            <person name="Hikiji T."/>
            <person name="Kobatake N."/>
            <person name="Inagaki H."/>
            <person name="Ikema Y."/>
            <person name="Okamoto S."/>
            <person name="Okitani R."/>
            <person name="Kawakami T."/>
            <person name="Noguchi S."/>
            <person name="Itoh T."/>
            <person name="Shigeta K."/>
            <person name="Senba T."/>
            <person name="Matsumura K."/>
            <person name="Nakajima Y."/>
            <person name="Mizuno T."/>
            <person name="Morinaga M."/>
            <person name="Sasaki M."/>
            <person name="Togashi T."/>
            <person name="Oyama M."/>
            <person name="Hata H."/>
            <person name="Watanabe M."/>
            <person name="Komatsu T."/>
            <person name="Mizushima-Sugano J."/>
            <person name="Satoh T."/>
            <person name="Shirai Y."/>
            <person name="Takahashi Y."/>
            <person name="Nakagawa K."/>
            <person name="Okumura K."/>
            <person name="Nagase T."/>
            <person name="Nomura N."/>
            <person name="Kikuchi H."/>
            <person name="Masuho Y."/>
            <person name="Yamashita R."/>
            <person name="Nakai K."/>
            <person name="Yada T."/>
            <person name="Nakamura Y."/>
            <person name="Ohara O."/>
            <person name="Isogai T."/>
            <person name="Sugano S."/>
        </authorList>
    </citation>
    <scope>NUCLEOTIDE SEQUENCE [LARGE SCALE MRNA]</scope>
    <scope>VARIANT GLU-185</scope>
    <source>
        <tissue>Testis</tissue>
    </source>
</reference>
<reference key="2">
    <citation type="journal article" date="2007" name="BMC Genomics">
        <title>The full-ORF clone resource of the German cDNA consortium.</title>
        <authorList>
            <person name="Bechtel S."/>
            <person name="Rosenfelder H."/>
            <person name="Duda A."/>
            <person name="Schmidt C.P."/>
            <person name="Ernst U."/>
            <person name="Wellenreuther R."/>
            <person name="Mehrle A."/>
            <person name="Schuster C."/>
            <person name="Bahr A."/>
            <person name="Bloecker H."/>
            <person name="Heubner D."/>
            <person name="Hoerlein A."/>
            <person name="Michel G."/>
            <person name="Wedler H."/>
            <person name="Koehrer K."/>
            <person name="Ottenwaelder B."/>
            <person name="Poustka A."/>
            <person name="Wiemann S."/>
            <person name="Schupp I."/>
        </authorList>
    </citation>
    <scope>NUCLEOTIDE SEQUENCE [LARGE SCALE MRNA]</scope>
    <scope>VARIANT GLU-185</scope>
    <source>
        <tissue>Testis</tissue>
    </source>
</reference>
<reference key="3">
    <citation type="journal article" date="2005" name="Nature">
        <title>The DNA sequence of the human X chromosome.</title>
        <authorList>
            <person name="Ross M.T."/>
            <person name="Grafham D.V."/>
            <person name="Coffey A.J."/>
            <person name="Scherer S."/>
            <person name="McLay K."/>
            <person name="Muzny D."/>
            <person name="Platzer M."/>
            <person name="Howell G.R."/>
            <person name="Burrows C."/>
            <person name="Bird C.P."/>
            <person name="Frankish A."/>
            <person name="Lovell F.L."/>
            <person name="Howe K.L."/>
            <person name="Ashurst J.L."/>
            <person name="Fulton R.S."/>
            <person name="Sudbrak R."/>
            <person name="Wen G."/>
            <person name="Jones M.C."/>
            <person name="Hurles M.E."/>
            <person name="Andrews T.D."/>
            <person name="Scott C.E."/>
            <person name="Searle S."/>
            <person name="Ramser J."/>
            <person name="Whittaker A."/>
            <person name="Deadman R."/>
            <person name="Carter N.P."/>
            <person name="Hunt S.E."/>
            <person name="Chen R."/>
            <person name="Cree A."/>
            <person name="Gunaratne P."/>
            <person name="Havlak P."/>
            <person name="Hodgson A."/>
            <person name="Metzker M.L."/>
            <person name="Richards S."/>
            <person name="Scott G."/>
            <person name="Steffen D."/>
            <person name="Sodergren E."/>
            <person name="Wheeler D.A."/>
            <person name="Worley K.C."/>
            <person name="Ainscough R."/>
            <person name="Ambrose K.D."/>
            <person name="Ansari-Lari M.A."/>
            <person name="Aradhya S."/>
            <person name="Ashwell R.I."/>
            <person name="Babbage A.K."/>
            <person name="Bagguley C.L."/>
            <person name="Ballabio A."/>
            <person name="Banerjee R."/>
            <person name="Barker G.E."/>
            <person name="Barlow K.F."/>
            <person name="Barrett I.P."/>
            <person name="Bates K.N."/>
            <person name="Beare D.M."/>
            <person name="Beasley H."/>
            <person name="Beasley O."/>
            <person name="Beck A."/>
            <person name="Bethel G."/>
            <person name="Blechschmidt K."/>
            <person name="Brady N."/>
            <person name="Bray-Allen S."/>
            <person name="Bridgeman A.M."/>
            <person name="Brown A.J."/>
            <person name="Brown M.J."/>
            <person name="Bonnin D."/>
            <person name="Bruford E.A."/>
            <person name="Buhay C."/>
            <person name="Burch P."/>
            <person name="Burford D."/>
            <person name="Burgess J."/>
            <person name="Burrill W."/>
            <person name="Burton J."/>
            <person name="Bye J.M."/>
            <person name="Carder C."/>
            <person name="Carrel L."/>
            <person name="Chako J."/>
            <person name="Chapman J.C."/>
            <person name="Chavez D."/>
            <person name="Chen E."/>
            <person name="Chen G."/>
            <person name="Chen Y."/>
            <person name="Chen Z."/>
            <person name="Chinault C."/>
            <person name="Ciccodicola A."/>
            <person name="Clark S.Y."/>
            <person name="Clarke G."/>
            <person name="Clee C.M."/>
            <person name="Clegg S."/>
            <person name="Clerc-Blankenburg K."/>
            <person name="Clifford K."/>
            <person name="Cobley V."/>
            <person name="Cole C.G."/>
            <person name="Conquer J.S."/>
            <person name="Corby N."/>
            <person name="Connor R.E."/>
            <person name="David R."/>
            <person name="Davies J."/>
            <person name="Davis C."/>
            <person name="Davis J."/>
            <person name="Delgado O."/>
            <person name="Deshazo D."/>
            <person name="Dhami P."/>
            <person name="Ding Y."/>
            <person name="Dinh H."/>
            <person name="Dodsworth S."/>
            <person name="Draper H."/>
            <person name="Dugan-Rocha S."/>
            <person name="Dunham A."/>
            <person name="Dunn M."/>
            <person name="Durbin K.J."/>
            <person name="Dutta I."/>
            <person name="Eades T."/>
            <person name="Ellwood M."/>
            <person name="Emery-Cohen A."/>
            <person name="Errington H."/>
            <person name="Evans K.L."/>
            <person name="Faulkner L."/>
            <person name="Francis F."/>
            <person name="Frankland J."/>
            <person name="Fraser A.E."/>
            <person name="Galgoczy P."/>
            <person name="Gilbert J."/>
            <person name="Gill R."/>
            <person name="Gloeckner G."/>
            <person name="Gregory S.G."/>
            <person name="Gribble S."/>
            <person name="Griffiths C."/>
            <person name="Grocock R."/>
            <person name="Gu Y."/>
            <person name="Gwilliam R."/>
            <person name="Hamilton C."/>
            <person name="Hart E.A."/>
            <person name="Hawes A."/>
            <person name="Heath P.D."/>
            <person name="Heitmann K."/>
            <person name="Hennig S."/>
            <person name="Hernandez J."/>
            <person name="Hinzmann B."/>
            <person name="Ho S."/>
            <person name="Hoffs M."/>
            <person name="Howden P.J."/>
            <person name="Huckle E.J."/>
            <person name="Hume J."/>
            <person name="Hunt P.J."/>
            <person name="Hunt A.R."/>
            <person name="Isherwood J."/>
            <person name="Jacob L."/>
            <person name="Johnson D."/>
            <person name="Jones S."/>
            <person name="de Jong P.J."/>
            <person name="Joseph S.S."/>
            <person name="Keenan S."/>
            <person name="Kelly S."/>
            <person name="Kershaw J.K."/>
            <person name="Khan Z."/>
            <person name="Kioschis P."/>
            <person name="Klages S."/>
            <person name="Knights A.J."/>
            <person name="Kosiura A."/>
            <person name="Kovar-Smith C."/>
            <person name="Laird G.K."/>
            <person name="Langford C."/>
            <person name="Lawlor S."/>
            <person name="Leversha M."/>
            <person name="Lewis L."/>
            <person name="Liu W."/>
            <person name="Lloyd C."/>
            <person name="Lloyd D.M."/>
            <person name="Loulseged H."/>
            <person name="Loveland J.E."/>
            <person name="Lovell J.D."/>
            <person name="Lozado R."/>
            <person name="Lu J."/>
            <person name="Lyne R."/>
            <person name="Ma J."/>
            <person name="Maheshwari M."/>
            <person name="Matthews L.H."/>
            <person name="McDowall J."/>
            <person name="McLaren S."/>
            <person name="McMurray A."/>
            <person name="Meidl P."/>
            <person name="Meitinger T."/>
            <person name="Milne S."/>
            <person name="Miner G."/>
            <person name="Mistry S.L."/>
            <person name="Morgan M."/>
            <person name="Morris S."/>
            <person name="Mueller I."/>
            <person name="Mullikin J.C."/>
            <person name="Nguyen N."/>
            <person name="Nordsiek G."/>
            <person name="Nyakatura G."/>
            <person name="O'dell C.N."/>
            <person name="Okwuonu G."/>
            <person name="Palmer S."/>
            <person name="Pandian R."/>
            <person name="Parker D."/>
            <person name="Parrish J."/>
            <person name="Pasternak S."/>
            <person name="Patel D."/>
            <person name="Pearce A.V."/>
            <person name="Pearson D.M."/>
            <person name="Pelan S.E."/>
            <person name="Perez L."/>
            <person name="Porter K.M."/>
            <person name="Ramsey Y."/>
            <person name="Reichwald K."/>
            <person name="Rhodes S."/>
            <person name="Ridler K.A."/>
            <person name="Schlessinger D."/>
            <person name="Schueler M.G."/>
            <person name="Sehra H.K."/>
            <person name="Shaw-Smith C."/>
            <person name="Shen H."/>
            <person name="Sheridan E.M."/>
            <person name="Shownkeen R."/>
            <person name="Skuce C.D."/>
            <person name="Smith M.L."/>
            <person name="Sotheran E.C."/>
            <person name="Steingruber H.E."/>
            <person name="Steward C.A."/>
            <person name="Storey R."/>
            <person name="Swann R.M."/>
            <person name="Swarbreck D."/>
            <person name="Tabor P.E."/>
            <person name="Taudien S."/>
            <person name="Taylor T."/>
            <person name="Teague B."/>
            <person name="Thomas K."/>
            <person name="Thorpe A."/>
            <person name="Timms K."/>
            <person name="Tracey A."/>
            <person name="Trevanion S."/>
            <person name="Tromans A.C."/>
            <person name="d'Urso M."/>
            <person name="Verduzco D."/>
            <person name="Villasana D."/>
            <person name="Waldron L."/>
            <person name="Wall M."/>
            <person name="Wang Q."/>
            <person name="Warren J."/>
            <person name="Warry G.L."/>
            <person name="Wei X."/>
            <person name="West A."/>
            <person name="Whitehead S.L."/>
            <person name="Whiteley M.N."/>
            <person name="Wilkinson J.E."/>
            <person name="Willey D.L."/>
            <person name="Williams G."/>
            <person name="Williams L."/>
            <person name="Williamson A."/>
            <person name="Williamson H."/>
            <person name="Wilming L."/>
            <person name="Woodmansey R.L."/>
            <person name="Wray P.W."/>
            <person name="Yen J."/>
            <person name="Zhang J."/>
            <person name="Zhou J."/>
            <person name="Zoghbi H."/>
            <person name="Zorilla S."/>
            <person name="Buck D."/>
            <person name="Reinhardt R."/>
            <person name="Poustka A."/>
            <person name="Rosenthal A."/>
            <person name="Lehrach H."/>
            <person name="Meindl A."/>
            <person name="Minx P.J."/>
            <person name="Hillier L.W."/>
            <person name="Willard H.F."/>
            <person name="Wilson R.K."/>
            <person name="Waterston R.H."/>
            <person name="Rice C.M."/>
            <person name="Vaudin M."/>
            <person name="Coulson A."/>
            <person name="Nelson D.L."/>
            <person name="Weinstock G."/>
            <person name="Sulston J.E."/>
            <person name="Durbin R.M."/>
            <person name="Hubbard T."/>
            <person name="Gibbs R.A."/>
            <person name="Beck S."/>
            <person name="Rogers J."/>
            <person name="Bentley D.R."/>
        </authorList>
    </citation>
    <scope>NUCLEOTIDE SEQUENCE [LARGE SCALE GENOMIC DNA]</scope>
</reference>
<reference key="4">
    <citation type="submission" date="2005-09" db="EMBL/GenBank/DDBJ databases">
        <authorList>
            <person name="Mural R.J."/>
            <person name="Istrail S."/>
            <person name="Sutton G."/>
            <person name="Florea L."/>
            <person name="Halpern A.L."/>
            <person name="Mobarry C.M."/>
            <person name="Lippert R."/>
            <person name="Walenz B."/>
            <person name="Shatkay H."/>
            <person name="Dew I."/>
            <person name="Miller J.R."/>
            <person name="Flanigan M.J."/>
            <person name="Edwards N.J."/>
            <person name="Bolanos R."/>
            <person name="Fasulo D."/>
            <person name="Halldorsson B.V."/>
            <person name="Hannenhalli S."/>
            <person name="Turner R."/>
            <person name="Yooseph S."/>
            <person name="Lu F."/>
            <person name="Nusskern D.R."/>
            <person name="Shue B.C."/>
            <person name="Zheng X.H."/>
            <person name="Zhong F."/>
            <person name="Delcher A.L."/>
            <person name="Huson D.H."/>
            <person name="Kravitz S.A."/>
            <person name="Mouchard L."/>
            <person name="Reinert K."/>
            <person name="Remington K.A."/>
            <person name="Clark A.G."/>
            <person name="Waterman M.S."/>
            <person name="Eichler E.E."/>
            <person name="Adams M.D."/>
            <person name="Hunkapiller M.W."/>
            <person name="Myers E.W."/>
            <person name="Venter J.C."/>
        </authorList>
    </citation>
    <scope>NUCLEOTIDE SEQUENCE [LARGE SCALE GENOMIC DNA]</scope>
</reference>
<reference key="5">
    <citation type="journal article" date="2004" name="Genome Res.">
        <title>The status, quality, and expansion of the NIH full-length cDNA project: the Mammalian Gene Collection (MGC).</title>
        <authorList>
            <consortium name="The MGC Project Team"/>
        </authorList>
    </citation>
    <scope>NUCLEOTIDE SEQUENCE [LARGE SCALE MRNA]</scope>
    <source>
        <tissue>Testis</tissue>
    </source>
</reference>
<reference key="6">
    <citation type="journal article" date="2009" name="Genomics">
        <title>Identification of FAM46D as a novel cancer/testis antigen using EST data and serological analysis.</title>
        <authorList>
            <person name="Bettoni F."/>
            <person name="Filho F.C."/>
            <person name="Grosso D.M."/>
            <person name="Galante P.A."/>
            <person name="Parmigiani R.B."/>
            <person name="Geraldo M.V."/>
            <person name="Henrique-Silva F."/>
            <person name="Oba-Shinjo S.M."/>
            <person name="Marie S.K."/>
            <person name="Soares F.A."/>
            <person name="Brentani H.P."/>
            <person name="Simpson A.J."/>
            <person name="de Souza S.J."/>
            <person name="Camargo A.A."/>
        </authorList>
    </citation>
    <scope>TISSUE SPECIFICITY</scope>
</reference>
<reference key="7">
    <citation type="journal article" date="2017" name="Nat. Commun.">
        <title>The non-canonical poly(A) polymerase FAM46C acts as an onco-suppressor in multiple myeloma.</title>
        <authorList>
            <person name="Mroczek S."/>
            <person name="Chlebowska J."/>
            <person name="Kulinski T.M."/>
            <person name="Gewartowska O."/>
            <person name="Gruchota J."/>
            <person name="Cysewski D."/>
            <person name="Liudkovska V."/>
            <person name="Borsuk E."/>
            <person name="Nowis D."/>
            <person name="Dziembowski A."/>
        </authorList>
    </citation>
    <scope>FUNCTION</scope>
    <scope>CATALYTIC ACTIVITY</scope>
</reference>
<reference key="8">
    <citation type="journal article" date="2020" name="Structure">
        <title>Structural and Functional Analyses of the FAM46C/Plk4 Complex.</title>
        <authorList>
            <person name="Chen H."/>
            <person name="Lu D."/>
            <person name="Shang G."/>
            <person name="Gao G."/>
            <person name="Zhang X."/>
        </authorList>
    </citation>
    <scope>FUNCTION</scope>
    <scope>CATALYTIC ACTIVITY</scope>
    <scope>MUTAGENESIS OF LYS-136; GLU-158; CYS-312 AND LEU-313</scope>
</reference>
<feature type="chain" id="PRO_0000259939" description="Terminal nucleotidyltransferase 5D">
    <location>
        <begin position="1"/>
        <end position="389"/>
    </location>
</feature>
<feature type="sequence variant" id="VAR_028980" description="In dbSNP:rs1113265." evidence="1 2">
    <original>D</original>
    <variation>E</variation>
    <location>
        <position position="185"/>
    </location>
</feature>
<feature type="mutagenesis site" description="Decrease about 50% the poly(A) elongation activity; when associated with E-312 and E-313." evidence="5">
    <original>K</original>
    <variation>P</variation>
    <location>
        <position position="136"/>
    </location>
</feature>
<feature type="mutagenesis site" description="Loss of poly(A) elongation activity." evidence="5">
    <original>E</original>
    <variation>Q</variation>
    <location>
        <position position="158"/>
    </location>
</feature>
<feature type="mutagenesis site" description="Does not affect poly (A) elongation activity; when associated with E-313. Decrease about 50% the poly(A) elongation activity; when associated with P-136 and E-313." evidence="5">
    <original>C</original>
    <variation>E</variation>
    <location>
        <position position="312"/>
    </location>
</feature>
<feature type="mutagenesis site" description="Does not affect poly (A) elongation activity; when associated with E-312. Decrease about 50% the poly(A) elongation activity; when associated with P-136 and E-312." evidence="5">
    <original>L</original>
    <variation>E</variation>
    <location>
        <position position="313"/>
    </location>
</feature>
<feature type="sequence conflict" description="In Ref. 5; AAH28710." evidence="7" ref="5">
    <original>T</original>
    <variation>A</variation>
    <location>
        <position position="10"/>
    </location>
</feature>
<feature type="sequence conflict" description="In Ref. 5; AAH28710." evidence="7" ref="5">
    <original>F</original>
    <variation>L</variation>
    <location>
        <position position="382"/>
    </location>
</feature>
<keyword id="KW-0548">Nucleotidyltransferase</keyword>
<keyword id="KW-1185">Reference proteome</keyword>
<keyword id="KW-0808">Transferase</keyword>
<proteinExistence type="evidence at protein level"/>